<accession>A6MM71</accession>
<reference key="1">
    <citation type="journal article" date="2007" name="Mol. Phylogenet. Evol.">
        <title>Phylogenetic and evolutionary implications of complete chloroplast genome sequences of four early-diverging angiosperms: Buxus (Buxaceae), Chloranthus (Chloranthaceae), Dioscorea (Dioscoreaceae), and Illicium (Schisandraceae).</title>
        <authorList>
            <person name="Hansen D.R."/>
            <person name="Dastidar S.G."/>
            <person name="Cai Z."/>
            <person name="Penaflor C."/>
            <person name="Kuehl J.V."/>
            <person name="Boore J.L."/>
            <person name="Jansen R.K."/>
        </authorList>
    </citation>
    <scope>NUCLEOTIDE SEQUENCE [LARGE SCALE GENOMIC DNA]</scope>
</reference>
<comment type="function">
    <text evidence="1">One of the essential components for the initiation of protein synthesis. Stabilizes the binding of IF-2 and IF-3 on the 30S subunit to which N-formylmethionyl-tRNA(fMet) subsequently binds. Helps modulate mRNA selection, yielding the 30S pre-initiation complex (PIC). Upon addition of the 50S ribosomal subunit IF-1, IF-2 and IF-3 are released leaving the mature 70S translation initiation complex.</text>
</comment>
<comment type="subunit">
    <text evidence="1">Component of the 30S ribosomal translation pre-initiation complex which assembles on the 30S ribosome in the order IF-2 and IF-3, IF-1 and N-formylmethionyl-tRNA(fMet); mRNA recruitment can occur at any time during PIC assembly.</text>
</comment>
<comment type="subcellular location">
    <subcellularLocation>
        <location evidence="1">Plastid</location>
        <location evidence="1">Chloroplast</location>
    </subcellularLocation>
</comment>
<comment type="similarity">
    <text evidence="1">Belongs to the IF-1 family.</text>
</comment>
<keyword id="KW-0150">Chloroplast</keyword>
<keyword id="KW-0396">Initiation factor</keyword>
<keyword id="KW-0934">Plastid</keyword>
<keyword id="KW-0648">Protein biosynthesis</keyword>
<keyword id="KW-0694">RNA-binding</keyword>
<keyword id="KW-0699">rRNA-binding</keyword>
<feature type="chain" id="PRO_0000338957" description="Translation initiation factor IF-1, chloroplastic">
    <location>
        <begin position="1"/>
        <end position="77"/>
    </location>
</feature>
<feature type="domain" description="S1-like" evidence="1">
    <location>
        <begin position="1"/>
        <end position="71"/>
    </location>
</feature>
<geneLocation type="chloroplast"/>
<gene>
    <name evidence="1" type="primary">infA</name>
</gene>
<evidence type="ECO:0000255" key="1">
    <source>
        <dbReference type="HAMAP-Rule" id="MF_00075"/>
    </source>
</evidence>
<sequence>MKEQKWIHEGLITESLPNGMFRVRLDNEDLILGYVSGKIRRSFIRILPGDRVKIEVSRYDSSRGRIIYRLRNKDSND</sequence>
<dbReference type="EMBL" id="EF380351">
    <property type="protein sequence ID" value="ABQ45283.1"/>
    <property type="molecule type" value="Genomic_DNA"/>
</dbReference>
<dbReference type="RefSeq" id="YP_001294219.1">
    <property type="nucleotide sequence ID" value="NC_009599.1"/>
</dbReference>
<dbReference type="SMR" id="A6MM71"/>
<dbReference type="GeneID" id="5236833"/>
<dbReference type="GO" id="GO:0009507">
    <property type="term" value="C:chloroplast"/>
    <property type="evidence" value="ECO:0007669"/>
    <property type="project" value="UniProtKB-SubCell"/>
</dbReference>
<dbReference type="GO" id="GO:0005829">
    <property type="term" value="C:cytosol"/>
    <property type="evidence" value="ECO:0007669"/>
    <property type="project" value="TreeGrafter"/>
</dbReference>
<dbReference type="GO" id="GO:0043022">
    <property type="term" value="F:ribosome binding"/>
    <property type="evidence" value="ECO:0007669"/>
    <property type="project" value="UniProtKB-UniRule"/>
</dbReference>
<dbReference type="GO" id="GO:0019843">
    <property type="term" value="F:rRNA binding"/>
    <property type="evidence" value="ECO:0007669"/>
    <property type="project" value="UniProtKB-UniRule"/>
</dbReference>
<dbReference type="GO" id="GO:0003743">
    <property type="term" value="F:translation initiation factor activity"/>
    <property type="evidence" value="ECO:0007669"/>
    <property type="project" value="UniProtKB-UniRule"/>
</dbReference>
<dbReference type="CDD" id="cd04451">
    <property type="entry name" value="S1_IF1"/>
    <property type="match status" value="1"/>
</dbReference>
<dbReference type="FunFam" id="2.40.50.140:FF:000019">
    <property type="entry name" value="Translation initiation factor IF-1, chloroplastic"/>
    <property type="match status" value="1"/>
</dbReference>
<dbReference type="Gene3D" id="2.40.50.140">
    <property type="entry name" value="Nucleic acid-binding proteins"/>
    <property type="match status" value="1"/>
</dbReference>
<dbReference type="HAMAP" id="MF_00075">
    <property type="entry name" value="IF_1"/>
    <property type="match status" value="1"/>
</dbReference>
<dbReference type="InterPro" id="IPR012340">
    <property type="entry name" value="NA-bd_OB-fold"/>
</dbReference>
<dbReference type="InterPro" id="IPR006196">
    <property type="entry name" value="RNA-binding_domain_S1_IF1"/>
</dbReference>
<dbReference type="InterPro" id="IPR003029">
    <property type="entry name" value="S1_domain"/>
</dbReference>
<dbReference type="InterPro" id="IPR004368">
    <property type="entry name" value="TIF_IF1"/>
</dbReference>
<dbReference type="NCBIfam" id="TIGR00008">
    <property type="entry name" value="infA"/>
    <property type="match status" value="1"/>
</dbReference>
<dbReference type="PANTHER" id="PTHR33370">
    <property type="entry name" value="TRANSLATION INITIATION FACTOR IF-1, CHLOROPLASTIC"/>
    <property type="match status" value="1"/>
</dbReference>
<dbReference type="PANTHER" id="PTHR33370:SF1">
    <property type="entry name" value="TRANSLATION INITIATION FACTOR IF-1, CHLOROPLASTIC"/>
    <property type="match status" value="1"/>
</dbReference>
<dbReference type="Pfam" id="PF01176">
    <property type="entry name" value="eIF-1a"/>
    <property type="match status" value="1"/>
</dbReference>
<dbReference type="SMART" id="SM00316">
    <property type="entry name" value="S1"/>
    <property type="match status" value="1"/>
</dbReference>
<dbReference type="SUPFAM" id="SSF50249">
    <property type="entry name" value="Nucleic acid-binding proteins"/>
    <property type="match status" value="1"/>
</dbReference>
<dbReference type="PROSITE" id="PS50832">
    <property type="entry name" value="S1_IF1_TYPE"/>
    <property type="match status" value="1"/>
</dbReference>
<name>IF1C_BUXMI</name>
<proteinExistence type="inferred from homology"/>
<protein>
    <recommendedName>
        <fullName evidence="1">Translation initiation factor IF-1, chloroplastic</fullName>
    </recommendedName>
</protein>
<organism>
    <name type="scientific">Buxus microphylla</name>
    <name type="common">Littleleaf boxwood</name>
    <name type="synonym">Japanese boxwood</name>
    <dbReference type="NCBI Taxonomy" id="153571"/>
    <lineage>
        <taxon>Eukaryota</taxon>
        <taxon>Viridiplantae</taxon>
        <taxon>Streptophyta</taxon>
        <taxon>Embryophyta</taxon>
        <taxon>Tracheophyta</taxon>
        <taxon>Spermatophyta</taxon>
        <taxon>Magnoliopsida</taxon>
        <taxon>Buxales</taxon>
        <taxon>Buxaceae</taxon>
        <taxon>Buxus</taxon>
    </lineage>
</organism>